<name>AQPZ2_AGRFC</name>
<dbReference type="EMBL" id="AE007872">
    <property type="protein sequence ID" value="AAK90735.1"/>
    <property type="molecule type" value="Genomic_DNA"/>
</dbReference>
<dbReference type="PIR" id="AC3204">
    <property type="entry name" value="AC3204"/>
</dbReference>
<dbReference type="RefSeq" id="NP_396294.1">
    <property type="nucleotide sequence ID" value="NC_003064.2"/>
</dbReference>
<dbReference type="RefSeq" id="WP_010974613.1">
    <property type="nucleotide sequence ID" value="NC_003064.2"/>
</dbReference>
<dbReference type="PDB" id="3LLQ">
    <property type="method" value="X-ray"/>
    <property type="resolution" value="2.01 A"/>
    <property type="chains" value="A/B=1-228"/>
</dbReference>
<dbReference type="PDBsum" id="3LLQ"/>
<dbReference type="SMR" id="Q8UJW4"/>
<dbReference type="EnsemblBacteria" id="AAK90735">
    <property type="protein sequence ID" value="AAK90735"/>
    <property type="gene ID" value="Atu5361"/>
</dbReference>
<dbReference type="GeneID" id="1137134"/>
<dbReference type="KEGG" id="atu:Atu5361"/>
<dbReference type="PATRIC" id="fig|176299.10.peg.5033"/>
<dbReference type="eggNOG" id="COG0580">
    <property type="taxonomic scope" value="Bacteria"/>
</dbReference>
<dbReference type="HOGENOM" id="CLU_020019_3_2_5"/>
<dbReference type="OrthoDB" id="9807293at2"/>
<dbReference type="PhylomeDB" id="Q8UJW4"/>
<dbReference type="BioCyc" id="AGRO:ATU5361-MONOMER"/>
<dbReference type="EvolutionaryTrace" id="Q8UJW4"/>
<dbReference type="Proteomes" id="UP000000813">
    <property type="component" value="Plasmid At"/>
</dbReference>
<dbReference type="GO" id="GO:0005886">
    <property type="term" value="C:plasma membrane"/>
    <property type="evidence" value="ECO:0007669"/>
    <property type="project" value="UniProtKB-SubCell"/>
</dbReference>
<dbReference type="GO" id="GO:0015250">
    <property type="term" value="F:water channel activity"/>
    <property type="evidence" value="ECO:0007669"/>
    <property type="project" value="UniProtKB-UniRule"/>
</dbReference>
<dbReference type="FunFam" id="1.20.1080.10:FF:000007">
    <property type="entry name" value="Aquaporin Z"/>
    <property type="match status" value="1"/>
</dbReference>
<dbReference type="Gene3D" id="1.20.1080.10">
    <property type="entry name" value="Glycerol uptake facilitator protein"/>
    <property type="match status" value="1"/>
</dbReference>
<dbReference type="HAMAP" id="MF_01146">
    <property type="entry name" value="Aquaporin_Z"/>
    <property type="match status" value="1"/>
</dbReference>
<dbReference type="InterPro" id="IPR023271">
    <property type="entry name" value="Aquaporin-like"/>
</dbReference>
<dbReference type="InterPro" id="IPR034294">
    <property type="entry name" value="Aquaporin_transptr"/>
</dbReference>
<dbReference type="InterPro" id="IPR023743">
    <property type="entry name" value="Aquaporin_Z"/>
</dbReference>
<dbReference type="InterPro" id="IPR000425">
    <property type="entry name" value="MIP"/>
</dbReference>
<dbReference type="InterPro" id="IPR022357">
    <property type="entry name" value="MIP_CS"/>
</dbReference>
<dbReference type="NCBIfam" id="TIGR00861">
    <property type="entry name" value="MIP"/>
    <property type="match status" value="1"/>
</dbReference>
<dbReference type="NCBIfam" id="NF003838">
    <property type="entry name" value="PRK05420.1"/>
    <property type="match status" value="1"/>
</dbReference>
<dbReference type="PANTHER" id="PTHR19139">
    <property type="entry name" value="AQUAPORIN TRANSPORTER"/>
    <property type="match status" value="1"/>
</dbReference>
<dbReference type="PANTHER" id="PTHR19139:SF199">
    <property type="entry name" value="MIP17260P"/>
    <property type="match status" value="1"/>
</dbReference>
<dbReference type="Pfam" id="PF00230">
    <property type="entry name" value="MIP"/>
    <property type="match status" value="1"/>
</dbReference>
<dbReference type="PRINTS" id="PR00783">
    <property type="entry name" value="MINTRINSICP"/>
</dbReference>
<dbReference type="SUPFAM" id="SSF81338">
    <property type="entry name" value="Aquaporin-like"/>
    <property type="match status" value="1"/>
</dbReference>
<dbReference type="PROSITE" id="PS00221">
    <property type="entry name" value="MIP"/>
    <property type="match status" value="1"/>
</dbReference>
<geneLocation type="plasmid">
    <name>AT</name>
</geneLocation>
<reference key="1">
    <citation type="journal article" date="2001" name="Science">
        <title>The genome of the natural genetic engineer Agrobacterium tumefaciens C58.</title>
        <authorList>
            <person name="Wood D.W."/>
            <person name="Setubal J.C."/>
            <person name="Kaul R."/>
            <person name="Monks D.E."/>
            <person name="Kitajima J.P."/>
            <person name="Okura V.K."/>
            <person name="Zhou Y."/>
            <person name="Chen L."/>
            <person name="Wood G.E."/>
            <person name="Almeida N.F. Jr."/>
            <person name="Woo L."/>
            <person name="Chen Y."/>
            <person name="Paulsen I.T."/>
            <person name="Eisen J.A."/>
            <person name="Karp P.D."/>
            <person name="Bovee D. Sr."/>
            <person name="Chapman P."/>
            <person name="Clendenning J."/>
            <person name="Deatherage G."/>
            <person name="Gillet W."/>
            <person name="Grant C."/>
            <person name="Kutyavin T."/>
            <person name="Levy R."/>
            <person name="Li M.-J."/>
            <person name="McClelland E."/>
            <person name="Palmieri A."/>
            <person name="Raymond C."/>
            <person name="Rouse G."/>
            <person name="Saenphimmachak C."/>
            <person name="Wu Z."/>
            <person name="Romero P."/>
            <person name="Gordon D."/>
            <person name="Zhang S."/>
            <person name="Yoo H."/>
            <person name="Tao Y."/>
            <person name="Biddle P."/>
            <person name="Jung M."/>
            <person name="Krespan W."/>
            <person name="Perry M."/>
            <person name="Gordon-Kamm B."/>
            <person name="Liao L."/>
            <person name="Kim S."/>
            <person name="Hendrick C."/>
            <person name="Zhao Z.-Y."/>
            <person name="Dolan M."/>
            <person name="Chumley F."/>
            <person name="Tingey S.V."/>
            <person name="Tomb J.-F."/>
            <person name="Gordon M.P."/>
            <person name="Olson M.V."/>
            <person name="Nester E.W."/>
        </authorList>
    </citation>
    <scope>NUCLEOTIDE SEQUENCE [LARGE SCALE GENOMIC DNA]</scope>
</reference>
<reference key="2">
    <citation type="journal article" date="2001" name="Science">
        <title>Genome sequence of the plant pathogen and biotechnology agent Agrobacterium tumefaciens C58.</title>
        <authorList>
            <person name="Goodner B."/>
            <person name="Hinkle G."/>
            <person name="Gattung S."/>
            <person name="Miller N."/>
            <person name="Blanchard M."/>
            <person name="Qurollo B."/>
            <person name="Goldman B.S."/>
            <person name="Cao Y."/>
            <person name="Askenazi M."/>
            <person name="Halling C."/>
            <person name="Mullin L."/>
            <person name="Houmiel K."/>
            <person name="Gordon J."/>
            <person name="Vaudin M."/>
            <person name="Iartchouk O."/>
            <person name="Epp A."/>
            <person name="Liu F."/>
            <person name="Wollam C."/>
            <person name="Allinger M."/>
            <person name="Doughty D."/>
            <person name="Scott C."/>
            <person name="Lappas C."/>
            <person name="Markelz B."/>
            <person name="Flanagan C."/>
            <person name="Crowell C."/>
            <person name="Gurson J."/>
            <person name="Lomo C."/>
            <person name="Sear C."/>
            <person name="Strub G."/>
            <person name="Cielo C."/>
            <person name="Slater S."/>
        </authorList>
    </citation>
    <scope>NUCLEOTIDE SEQUENCE [LARGE SCALE GENOMIC DNA]</scope>
    <source>
        <strain>C58 / ATCC 33970</strain>
    </source>
</reference>
<feature type="chain" id="PRO_0000063979" description="Aquaporin Z 2">
    <location>
        <begin position="1"/>
        <end position="228"/>
    </location>
</feature>
<feature type="transmembrane region" description="Helical" evidence="1">
    <location>
        <begin position="9"/>
        <end position="29"/>
    </location>
</feature>
<feature type="transmembrane region" description="Helical" evidence="1">
    <location>
        <begin position="34"/>
        <end position="54"/>
    </location>
</feature>
<feature type="transmembrane region" description="Helical" evidence="1">
    <location>
        <begin position="82"/>
        <end position="102"/>
    </location>
</feature>
<feature type="transmembrane region" description="Helical" evidence="1">
    <location>
        <begin position="129"/>
        <end position="149"/>
    </location>
</feature>
<feature type="transmembrane region" description="Helical" evidence="1">
    <location>
        <begin position="158"/>
        <end position="178"/>
    </location>
</feature>
<feature type="transmembrane region" description="Helical" evidence="1">
    <location>
        <begin position="204"/>
        <end position="224"/>
    </location>
</feature>
<feature type="short sequence motif" description="NPA 1" evidence="1">
    <location>
        <begin position="63"/>
        <end position="65"/>
    </location>
</feature>
<feature type="short sequence motif" description="NPA 2" evidence="1">
    <location>
        <begin position="184"/>
        <end position="186"/>
    </location>
</feature>
<feature type="site" description="Involved in tetramerization or stability of the tetramer" evidence="1">
    <location>
        <position position="20"/>
    </location>
</feature>
<feature type="site" description="Selectivity filter" evidence="1">
    <location>
        <position position="43"/>
    </location>
</feature>
<feature type="site" description="Selectivity filter" evidence="1">
    <location>
        <position position="172"/>
    </location>
</feature>
<feature type="site" description="Selectivity filter" evidence="1">
    <location>
        <position position="181"/>
    </location>
</feature>
<feature type="site" description="Selectivity filter" evidence="1">
    <location>
        <position position="187"/>
    </location>
</feature>
<feature type="helix" evidence="3">
    <location>
        <begin position="2"/>
        <end position="26"/>
    </location>
</feature>
<feature type="turn" evidence="3">
    <location>
        <begin position="30"/>
        <end position="32"/>
    </location>
</feature>
<feature type="helix" evidence="3">
    <location>
        <begin position="35"/>
        <end position="58"/>
    </location>
</feature>
<feature type="helix" evidence="3">
    <location>
        <begin position="64"/>
        <end position="72"/>
    </location>
</feature>
<feature type="helix" evidence="3">
    <location>
        <begin position="78"/>
        <end position="80"/>
    </location>
</feature>
<feature type="helix" evidence="3">
    <location>
        <begin position="81"/>
        <end position="103"/>
    </location>
</feature>
<feature type="turn" evidence="3">
    <location>
        <begin position="112"/>
        <end position="115"/>
    </location>
</feature>
<feature type="helix" evidence="3">
    <location>
        <begin position="120"/>
        <end position="122"/>
    </location>
</feature>
<feature type="helix" evidence="3">
    <location>
        <begin position="129"/>
        <end position="151"/>
    </location>
</feature>
<feature type="helix" evidence="3">
    <location>
        <begin position="160"/>
        <end position="179"/>
    </location>
</feature>
<feature type="helix" evidence="3">
    <location>
        <begin position="185"/>
        <end position="195"/>
    </location>
</feature>
<feature type="helix" evidence="3">
    <location>
        <begin position="197"/>
        <end position="202"/>
    </location>
</feature>
<feature type="helix" evidence="3">
    <location>
        <begin position="205"/>
        <end position="224"/>
    </location>
</feature>
<accession>Q8UJW4</accession>
<proteinExistence type="evidence at protein level"/>
<protein>
    <recommendedName>
        <fullName evidence="1">Aquaporin Z 2</fullName>
    </recommendedName>
</protein>
<organism>
    <name type="scientific">Agrobacterium fabrum (strain C58 / ATCC 33970)</name>
    <name type="common">Agrobacterium tumefaciens (strain C58)</name>
    <dbReference type="NCBI Taxonomy" id="176299"/>
    <lineage>
        <taxon>Bacteria</taxon>
        <taxon>Pseudomonadati</taxon>
        <taxon>Pseudomonadota</taxon>
        <taxon>Alphaproteobacteria</taxon>
        <taxon>Hyphomicrobiales</taxon>
        <taxon>Rhizobiaceae</taxon>
        <taxon>Rhizobium/Agrobacterium group</taxon>
        <taxon>Agrobacterium</taxon>
        <taxon>Agrobacterium tumefaciens complex</taxon>
    </lineage>
</organism>
<sequence length="228" mass="23138">MGRKLLAEFFGTFWLVFGGCGSAVFAAAFPELGIGFTGVALAFGLTVLTMAYAVGGISGGHFNPAVSVGLTVAGRFPASSLVPYVIAQVAGAIVAAAALYVIATGKAGIDLGGFASNGYGEHSPGGYSLVSALLIEIILTAFFLIVILGSTHGRVPAGFAPIAIGLALTLIHLISIPVTNTSVNPARSTGQALFVGGWALQQLWLFWLAPIVGGAAGAVIWKLFGEKD</sequence>
<comment type="function">
    <text evidence="1">Channel that permits osmotically driven movement of water in both directions. It is involved in the osmoregulation and in the maintenance of cell turgor during volume expansion in rapidly growing cells. It mediates rapid entry or exit of water in response to abrupt changes in osmolarity.</text>
</comment>
<comment type="catalytic activity">
    <reaction evidence="1">
        <text>H2O(in) = H2O(out)</text>
        <dbReference type="Rhea" id="RHEA:29667"/>
        <dbReference type="ChEBI" id="CHEBI:15377"/>
    </reaction>
    <physiologicalReaction direction="left-to-right" evidence="1">
        <dbReference type="Rhea" id="RHEA:29668"/>
    </physiologicalReaction>
    <physiologicalReaction direction="right-to-left" evidence="1">
        <dbReference type="Rhea" id="RHEA:29669"/>
    </physiologicalReaction>
</comment>
<comment type="subunit">
    <text evidence="1">Homotetramer.</text>
</comment>
<comment type="subcellular location">
    <subcellularLocation>
        <location evidence="1">Cell inner membrane</location>
        <topology evidence="1">Multi-pass membrane protein</topology>
    </subcellularLocation>
</comment>
<comment type="domain">
    <text evidence="1">Aquaporins contain two tandem repeats each containing three membrane-spanning domains and a pore-forming loop with the signature motif Asn-Pro-Ala (NPA).</text>
</comment>
<comment type="similarity">
    <text evidence="1 2">Belongs to the MIP/aquaporin (TC 1.A.8) family.</text>
</comment>
<evidence type="ECO:0000255" key="1">
    <source>
        <dbReference type="HAMAP-Rule" id="MF_01146"/>
    </source>
</evidence>
<evidence type="ECO:0000305" key="2"/>
<evidence type="ECO:0007829" key="3">
    <source>
        <dbReference type="PDB" id="3LLQ"/>
    </source>
</evidence>
<gene>
    <name evidence="1" type="primary">aqpZ2</name>
    <name type="ordered locus">Atu5361</name>
    <name type="ORF">AGR_pAT_521</name>
</gene>
<keyword id="KW-0002">3D-structure</keyword>
<keyword id="KW-0997">Cell inner membrane</keyword>
<keyword id="KW-1003">Cell membrane</keyword>
<keyword id="KW-0472">Membrane</keyword>
<keyword id="KW-0614">Plasmid</keyword>
<keyword id="KW-1185">Reference proteome</keyword>
<keyword id="KW-0677">Repeat</keyword>
<keyword id="KW-0812">Transmembrane</keyword>
<keyword id="KW-1133">Transmembrane helix</keyword>
<keyword id="KW-0813">Transport</keyword>